<dbReference type="EMBL" id="CP000076">
    <property type="protein sequence ID" value="AAY96270.1"/>
    <property type="molecule type" value="Genomic_DNA"/>
</dbReference>
<dbReference type="RefSeq" id="WP_003176435.1">
    <property type="nucleotide sequence ID" value="NC_004129.6"/>
</dbReference>
<dbReference type="SMR" id="Q4K522"/>
<dbReference type="STRING" id="220664.PFL_5593"/>
<dbReference type="GeneID" id="98113718"/>
<dbReference type="KEGG" id="pfl:PFL_5593"/>
<dbReference type="eggNOG" id="COG0080">
    <property type="taxonomic scope" value="Bacteria"/>
</dbReference>
<dbReference type="HOGENOM" id="CLU_074237_2_0_6"/>
<dbReference type="Proteomes" id="UP000008540">
    <property type="component" value="Chromosome"/>
</dbReference>
<dbReference type="GO" id="GO:0022625">
    <property type="term" value="C:cytosolic large ribosomal subunit"/>
    <property type="evidence" value="ECO:0007669"/>
    <property type="project" value="TreeGrafter"/>
</dbReference>
<dbReference type="GO" id="GO:0070180">
    <property type="term" value="F:large ribosomal subunit rRNA binding"/>
    <property type="evidence" value="ECO:0007669"/>
    <property type="project" value="UniProtKB-UniRule"/>
</dbReference>
<dbReference type="GO" id="GO:0003735">
    <property type="term" value="F:structural constituent of ribosome"/>
    <property type="evidence" value="ECO:0007669"/>
    <property type="project" value="InterPro"/>
</dbReference>
<dbReference type="GO" id="GO:0006412">
    <property type="term" value="P:translation"/>
    <property type="evidence" value="ECO:0007669"/>
    <property type="project" value="UniProtKB-UniRule"/>
</dbReference>
<dbReference type="CDD" id="cd00349">
    <property type="entry name" value="Ribosomal_L11"/>
    <property type="match status" value="1"/>
</dbReference>
<dbReference type="FunFam" id="1.10.10.250:FF:000001">
    <property type="entry name" value="50S ribosomal protein L11"/>
    <property type="match status" value="1"/>
</dbReference>
<dbReference type="FunFam" id="3.30.1550.10:FF:000001">
    <property type="entry name" value="50S ribosomal protein L11"/>
    <property type="match status" value="1"/>
</dbReference>
<dbReference type="Gene3D" id="1.10.10.250">
    <property type="entry name" value="Ribosomal protein L11, C-terminal domain"/>
    <property type="match status" value="1"/>
</dbReference>
<dbReference type="Gene3D" id="3.30.1550.10">
    <property type="entry name" value="Ribosomal protein L11/L12, N-terminal domain"/>
    <property type="match status" value="1"/>
</dbReference>
<dbReference type="HAMAP" id="MF_00736">
    <property type="entry name" value="Ribosomal_uL11"/>
    <property type="match status" value="1"/>
</dbReference>
<dbReference type="InterPro" id="IPR000911">
    <property type="entry name" value="Ribosomal_uL11"/>
</dbReference>
<dbReference type="InterPro" id="IPR006519">
    <property type="entry name" value="Ribosomal_uL11_bac-typ"/>
</dbReference>
<dbReference type="InterPro" id="IPR020783">
    <property type="entry name" value="Ribosomal_uL11_C"/>
</dbReference>
<dbReference type="InterPro" id="IPR036769">
    <property type="entry name" value="Ribosomal_uL11_C_sf"/>
</dbReference>
<dbReference type="InterPro" id="IPR020785">
    <property type="entry name" value="Ribosomal_uL11_CS"/>
</dbReference>
<dbReference type="InterPro" id="IPR020784">
    <property type="entry name" value="Ribosomal_uL11_N"/>
</dbReference>
<dbReference type="InterPro" id="IPR036796">
    <property type="entry name" value="Ribosomal_uL11_N_sf"/>
</dbReference>
<dbReference type="NCBIfam" id="TIGR01632">
    <property type="entry name" value="L11_bact"/>
    <property type="match status" value="1"/>
</dbReference>
<dbReference type="PANTHER" id="PTHR11661">
    <property type="entry name" value="60S RIBOSOMAL PROTEIN L12"/>
    <property type="match status" value="1"/>
</dbReference>
<dbReference type="PANTHER" id="PTHR11661:SF1">
    <property type="entry name" value="LARGE RIBOSOMAL SUBUNIT PROTEIN UL11M"/>
    <property type="match status" value="1"/>
</dbReference>
<dbReference type="Pfam" id="PF00298">
    <property type="entry name" value="Ribosomal_L11"/>
    <property type="match status" value="1"/>
</dbReference>
<dbReference type="Pfam" id="PF03946">
    <property type="entry name" value="Ribosomal_L11_N"/>
    <property type="match status" value="1"/>
</dbReference>
<dbReference type="SMART" id="SM00649">
    <property type="entry name" value="RL11"/>
    <property type="match status" value="1"/>
</dbReference>
<dbReference type="SUPFAM" id="SSF54747">
    <property type="entry name" value="Ribosomal L11/L12e N-terminal domain"/>
    <property type="match status" value="1"/>
</dbReference>
<dbReference type="SUPFAM" id="SSF46906">
    <property type="entry name" value="Ribosomal protein L11, C-terminal domain"/>
    <property type="match status" value="1"/>
</dbReference>
<dbReference type="PROSITE" id="PS00359">
    <property type="entry name" value="RIBOSOMAL_L11"/>
    <property type="match status" value="1"/>
</dbReference>
<evidence type="ECO:0000255" key="1">
    <source>
        <dbReference type="HAMAP-Rule" id="MF_00736"/>
    </source>
</evidence>
<evidence type="ECO:0000305" key="2"/>
<sequence>MAKKITAYIKLQVKAAQANPSPPVGPALGQHGVNIMEFCKAFNARTQGLEPGLPTPVIITVYSDRSFTFETKSTPASVLLKKAAGLTSGSARPNTVKVGTVTRAQLEEIAKTKNADLTAADMDAAVRTIAGSARSMGLNVEGV</sequence>
<reference key="1">
    <citation type="journal article" date="2005" name="Nat. Biotechnol.">
        <title>Complete genome sequence of the plant commensal Pseudomonas fluorescens Pf-5.</title>
        <authorList>
            <person name="Paulsen I.T."/>
            <person name="Press C.M."/>
            <person name="Ravel J."/>
            <person name="Kobayashi D.Y."/>
            <person name="Myers G.S.A."/>
            <person name="Mavrodi D.V."/>
            <person name="DeBoy R.T."/>
            <person name="Seshadri R."/>
            <person name="Ren Q."/>
            <person name="Madupu R."/>
            <person name="Dodson R.J."/>
            <person name="Durkin A.S."/>
            <person name="Brinkac L.M."/>
            <person name="Daugherty S.C."/>
            <person name="Sullivan S.A."/>
            <person name="Rosovitz M.J."/>
            <person name="Gwinn M.L."/>
            <person name="Zhou L."/>
            <person name="Schneider D.J."/>
            <person name="Cartinhour S.W."/>
            <person name="Nelson W.C."/>
            <person name="Weidman J."/>
            <person name="Watkins K."/>
            <person name="Tran K."/>
            <person name="Khouri H."/>
            <person name="Pierson E.A."/>
            <person name="Pierson L.S. III"/>
            <person name="Thomashow L.S."/>
            <person name="Loper J.E."/>
        </authorList>
    </citation>
    <scope>NUCLEOTIDE SEQUENCE [LARGE SCALE GENOMIC DNA]</scope>
    <source>
        <strain>ATCC BAA-477 / NRRL B-23932 / Pf-5</strain>
    </source>
</reference>
<proteinExistence type="inferred from homology"/>
<accession>Q4K522</accession>
<keyword id="KW-0488">Methylation</keyword>
<keyword id="KW-0687">Ribonucleoprotein</keyword>
<keyword id="KW-0689">Ribosomal protein</keyword>
<keyword id="KW-0694">RNA-binding</keyword>
<keyword id="KW-0699">rRNA-binding</keyword>
<organism>
    <name type="scientific">Pseudomonas fluorescens (strain ATCC BAA-477 / NRRL B-23932 / Pf-5)</name>
    <dbReference type="NCBI Taxonomy" id="220664"/>
    <lineage>
        <taxon>Bacteria</taxon>
        <taxon>Pseudomonadati</taxon>
        <taxon>Pseudomonadota</taxon>
        <taxon>Gammaproteobacteria</taxon>
        <taxon>Pseudomonadales</taxon>
        <taxon>Pseudomonadaceae</taxon>
        <taxon>Pseudomonas</taxon>
    </lineage>
</organism>
<protein>
    <recommendedName>
        <fullName evidence="1">Large ribosomal subunit protein uL11</fullName>
    </recommendedName>
    <alternativeName>
        <fullName evidence="2">50S ribosomal protein L11</fullName>
    </alternativeName>
</protein>
<gene>
    <name evidence="1" type="primary">rplK</name>
    <name type="ordered locus">PFL_5593</name>
</gene>
<name>RL11_PSEF5</name>
<feature type="chain" id="PRO_0000258187" description="Large ribosomal subunit protein uL11">
    <location>
        <begin position="1"/>
        <end position="143"/>
    </location>
</feature>
<comment type="function">
    <text evidence="1">Forms part of the ribosomal stalk which helps the ribosome interact with GTP-bound translation factors.</text>
</comment>
<comment type="subunit">
    <text evidence="1">Part of the ribosomal stalk of the 50S ribosomal subunit. Interacts with L10 and the large rRNA to form the base of the stalk. L10 forms an elongated spine to which L12 dimers bind in a sequential fashion forming a multimeric L10(L12)X complex.</text>
</comment>
<comment type="PTM">
    <text evidence="1">One or more lysine residues are methylated.</text>
</comment>
<comment type="similarity">
    <text evidence="1">Belongs to the universal ribosomal protein uL11 family.</text>
</comment>